<keyword id="KW-0963">Cytoplasm</keyword>
<keyword id="KW-0217">Developmental protein</keyword>
<keyword id="KW-0221">Differentiation</keyword>
<keyword id="KW-0238">DNA-binding</keyword>
<keyword id="KW-0469">Meiosis</keyword>
<keyword id="KW-0539">Nucleus</keyword>
<keyword id="KW-0896">Oogenesis</keyword>
<keyword id="KW-1185">Reference proteome</keyword>
<keyword id="KW-0678">Repressor</keyword>
<keyword id="KW-0943">RNA-mediated gene silencing</keyword>
<keyword id="KW-0804">Transcription</keyword>
<keyword id="KW-0805">Transcription regulation</keyword>
<feature type="chain" id="PRO_0000367304" description="Protein maelstrom 2">
    <location>
        <begin position="1"/>
        <end position="370"/>
    </location>
</feature>
<feature type="DNA-binding region" description="HMG box">
    <location>
        <begin position="2"/>
        <end position="68"/>
    </location>
</feature>
<sequence length="370" mass="42026">MAQNKPNAFMAFVADWRACNRFGRGLSTSEAVAKCGPIWEGMSDRERGQYKSKAKDSNVLERESKTERLNCPGVHSKMQVEKNEAIDAELQMKRNIKRIVLKATNSMKLEEREFLFVSFNYFTKALNGDVYQPAELSACRFSLKGGISSNYSTMINPGHIIFGQTSDAQDHSRTTHKLPLPPNAMGEKNLGNLYSDTLKWLSASNDEEDEQYDHPVIVYTTPELMPVVKSCFRYLACEGDTDKHAEKIMVYDICYLFLTLKKTVLDLVGVPSDHMNIHVTNSFFRRDFFEFSSGIACDYHEEVDRTKYCTKSMVLRWGYMISHYICGDLAIPLQPRKHVPIEVKHSYTVTPGDSSLALDGTWTDSGYSGY</sequence>
<accession>B5DRY3</accession>
<protein>
    <recommendedName>
        <fullName>Protein maelstrom 2</fullName>
    </recommendedName>
</protein>
<reference key="1">
    <citation type="journal article" date="2005" name="Genome Res.">
        <title>Comparative genome sequencing of Drosophila pseudoobscura: chromosomal, gene, and cis-element evolution.</title>
        <authorList>
            <person name="Richards S."/>
            <person name="Liu Y."/>
            <person name="Bettencourt B.R."/>
            <person name="Hradecky P."/>
            <person name="Letovsky S."/>
            <person name="Nielsen R."/>
            <person name="Thornton K."/>
            <person name="Hubisz M.J."/>
            <person name="Chen R."/>
            <person name="Meisel R.P."/>
            <person name="Couronne O."/>
            <person name="Hua S."/>
            <person name="Smith M.A."/>
            <person name="Zhang P."/>
            <person name="Liu J."/>
            <person name="Bussemaker H.J."/>
            <person name="van Batenburg M.F."/>
            <person name="Howells S.L."/>
            <person name="Scherer S.E."/>
            <person name="Sodergren E."/>
            <person name="Matthews B.B."/>
            <person name="Crosby M.A."/>
            <person name="Schroeder A.J."/>
            <person name="Ortiz-Barrientos D."/>
            <person name="Rives C.M."/>
            <person name="Metzker M.L."/>
            <person name="Muzny D.M."/>
            <person name="Scott G."/>
            <person name="Steffen D."/>
            <person name="Wheeler D.A."/>
            <person name="Worley K.C."/>
            <person name="Havlak P."/>
            <person name="Durbin K.J."/>
            <person name="Egan A."/>
            <person name="Gill R."/>
            <person name="Hume J."/>
            <person name="Morgan M.B."/>
            <person name="Miner G."/>
            <person name="Hamilton C."/>
            <person name="Huang Y."/>
            <person name="Waldron L."/>
            <person name="Verduzco D."/>
            <person name="Clerc-Blankenburg K.P."/>
            <person name="Dubchak I."/>
            <person name="Noor M.A.F."/>
            <person name="Anderson W."/>
            <person name="White K.P."/>
            <person name="Clark A.G."/>
            <person name="Schaeffer S.W."/>
            <person name="Gelbart W.M."/>
            <person name="Weinstock G.M."/>
            <person name="Gibbs R.A."/>
        </authorList>
    </citation>
    <scope>NUCLEOTIDE SEQUENCE [LARGE SCALE GENOMIC DNA]</scope>
    <source>
        <strain>MV2-25 / Tucson 14011-0121.94</strain>
    </source>
</reference>
<organism>
    <name type="scientific">Drosophila pseudoobscura pseudoobscura</name>
    <name type="common">Fruit fly</name>
    <dbReference type="NCBI Taxonomy" id="46245"/>
    <lineage>
        <taxon>Eukaryota</taxon>
        <taxon>Metazoa</taxon>
        <taxon>Ecdysozoa</taxon>
        <taxon>Arthropoda</taxon>
        <taxon>Hexapoda</taxon>
        <taxon>Insecta</taxon>
        <taxon>Pterygota</taxon>
        <taxon>Neoptera</taxon>
        <taxon>Endopterygota</taxon>
        <taxon>Diptera</taxon>
        <taxon>Brachycera</taxon>
        <taxon>Muscomorpha</taxon>
        <taxon>Ephydroidea</taxon>
        <taxon>Drosophilidae</taxon>
        <taxon>Drosophila</taxon>
        <taxon>Sophophora</taxon>
    </lineage>
</organism>
<gene>
    <name type="primary">mael2</name>
    <name type="ORF">GA28156</name>
</gene>
<evidence type="ECO:0000250" key="1"/>
<evidence type="ECO:0000305" key="2"/>
<dbReference type="EMBL" id="CH475398">
    <property type="protein sequence ID" value="EDY71125.1"/>
    <property type="molecule type" value="Genomic_DNA"/>
</dbReference>
<dbReference type="RefSeq" id="XP_002132197.1">
    <property type="nucleotide sequence ID" value="XM_002132161.1"/>
</dbReference>
<dbReference type="SMR" id="B5DRY3"/>
<dbReference type="FunCoup" id="B5DRY3">
    <property type="interactions" value="58"/>
</dbReference>
<dbReference type="EnsemblMetazoa" id="FBtr0287471">
    <property type="protein sequence ID" value="FBpp0285909"/>
    <property type="gene ID" value="FBgn0249519"/>
</dbReference>
<dbReference type="KEGG" id="dpo:6899889"/>
<dbReference type="eggNOG" id="ENOG502QTQB">
    <property type="taxonomic scope" value="Eukaryota"/>
</dbReference>
<dbReference type="HOGENOM" id="CLU_044134_0_0_1"/>
<dbReference type="InParanoid" id="B5DRY3"/>
<dbReference type="OMA" id="DHSENTH"/>
<dbReference type="Proteomes" id="UP000001819">
    <property type="component" value="Chromosome 4"/>
</dbReference>
<dbReference type="Bgee" id="FBgn0249519">
    <property type="expression patterns" value="Expressed in insect adult head and 2 other cell types or tissues"/>
</dbReference>
<dbReference type="GO" id="GO:0005737">
    <property type="term" value="C:cytoplasm"/>
    <property type="evidence" value="ECO:0000250"/>
    <property type="project" value="UniProtKB"/>
</dbReference>
<dbReference type="GO" id="GO:0005634">
    <property type="term" value="C:nucleus"/>
    <property type="evidence" value="ECO:0000250"/>
    <property type="project" value="UniProtKB"/>
</dbReference>
<dbReference type="GO" id="GO:0043186">
    <property type="term" value="C:P granule"/>
    <property type="evidence" value="ECO:0000250"/>
    <property type="project" value="UniProtKB"/>
</dbReference>
<dbReference type="GO" id="GO:0048471">
    <property type="term" value="C:perinuclear region of cytoplasm"/>
    <property type="evidence" value="ECO:0000250"/>
    <property type="project" value="UniProtKB"/>
</dbReference>
<dbReference type="GO" id="GO:0000976">
    <property type="term" value="F:transcription cis-regulatory region binding"/>
    <property type="evidence" value="ECO:0000250"/>
    <property type="project" value="UniProtKB"/>
</dbReference>
<dbReference type="GO" id="GO:0030718">
    <property type="term" value="P:germ-line stem cell population maintenance"/>
    <property type="evidence" value="ECO:0000250"/>
    <property type="project" value="UniProtKB"/>
</dbReference>
<dbReference type="GO" id="GO:0007140">
    <property type="term" value="P:male meiotic nuclear division"/>
    <property type="evidence" value="ECO:0007669"/>
    <property type="project" value="TreeGrafter"/>
</dbReference>
<dbReference type="GO" id="GO:0045892">
    <property type="term" value="P:negative regulation of DNA-templated transcription"/>
    <property type="evidence" value="ECO:0000250"/>
    <property type="project" value="UniProtKB"/>
</dbReference>
<dbReference type="GO" id="GO:0048477">
    <property type="term" value="P:oogenesis"/>
    <property type="evidence" value="ECO:0007669"/>
    <property type="project" value="UniProtKB-KW"/>
</dbReference>
<dbReference type="GO" id="GO:0034587">
    <property type="term" value="P:piRNA processing"/>
    <property type="evidence" value="ECO:0000250"/>
    <property type="project" value="UniProtKB"/>
</dbReference>
<dbReference type="GO" id="GO:0060964">
    <property type="term" value="P:regulation of miRNA-mediated gene silencing"/>
    <property type="evidence" value="ECO:0007669"/>
    <property type="project" value="InterPro"/>
</dbReference>
<dbReference type="GO" id="GO:0031047">
    <property type="term" value="P:regulatory ncRNA-mediated gene silencing"/>
    <property type="evidence" value="ECO:0000250"/>
    <property type="project" value="UniProtKB"/>
</dbReference>
<dbReference type="GO" id="GO:0007283">
    <property type="term" value="P:spermatogenesis"/>
    <property type="evidence" value="ECO:0000250"/>
    <property type="project" value="UniProtKB"/>
</dbReference>
<dbReference type="FunFam" id="1.10.30.10:FF:000057">
    <property type="entry name" value="Protein maelstrom 2"/>
    <property type="match status" value="1"/>
</dbReference>
<dbReference type="Gene3D" id="1.10.30.10">
    <property type="entry name" value="High mobility group box domain"/>
    <property type="match status" value="1"/>
</dbReference>
<dbReference type="InterPro" id="IPR036910">
    <property type="entry name" value="HMG_box_dom_sf"/>
</dbReference>
<dbReference type="InterPro" id="IPR024970">
    <property type="entry name" value="Maelstrom"/>
</dbReference>
<dbReference type="InterPro" id="IPR039259">
    <property type="entry name" value="Protein_maelstrom"/>
</dbReference>
<dbReference type="PANTHER" id="PTHR21358">
    <property type="entry name" value="PROTEIN MAELSTROM HOMOLOG"/>
    <property type="match status" value="1"/>
</dbReference>
<dbReference type="PANTHER" id="PTHR21358:SF4">
    <property type="entry name" value="PROTEIN MAELSTROM HOMOLOG"/>
    <property type="match status" value="1"/>
</dbReference>
<dbReference type="Pfam" id="PF13017">
    <property type="entry name" value="Maelstrom"/>
    <property type="match status" value="1"/>
</dbReference>
<dbReference type="SUPFAM" id="SSF47095">
    <property type="entry name" value="HMG-box"/>
    <property type="match status" value="1"/>
</dbReference>
<proteinExistence type="inferred from homology"/>
<name>MAEL2_DROPS</name>
<comment type="function">
    <text evidence="1">Involved both in the piRNA and miRNA metabolic processes. As a component of the meiotic nuage, plays a central role during oogenesis by repressing transposable elements and preventing their mobilization, which is essential for the germline integrity. Repression of transposable elements is mediated via the piRNA metabolic process, which mediates the repression of transposable elements during meiosis by forming complexes composed of piRNAs and Piwi proteins and governs the repression of transposons. As a nuclear component, it is required for proper differentiation in the germline stem cell (GSC) lineage by repressing microRNA-7 (miR-7), thereby acting as an indirect regulator of bag-of-marbles (Bam). Acts by binding to the promoter of miR-7 gene and repressing its expression; miR-7 repression alleviates the Bam repression by miR-7, thereby allowing differentiation in the germline stem cell (GSC) lineage (By similarity).</text>
</comment>
<comment type="subcellular location">
    <subcellularLocation>
        <location>Cytoplasm</location>
    </subcellularLocation>
    <subcellularLocation>
        <location>Nucleus</location>
    </subcellularLocation>
    <text evidence="1">Component of the meiotic nuage, also named P granule, a germ-cell-specific organelle required to repress transposon activity during meiosis.</text>
</comment>
<comment type="similarity">
    <text evidence="2">Belongs to the maelstrom family.</text>
</comment>